<dbReference type="EC" id="2.8.1.7" evidence="1"/>
<dbReference type="EMBL" id="CP001182">
    <property type="protein sequence ID" value="ACJ41235.1"/>
    <property type="molecule type" value="Genomic_DNA"/>
</dbReference>
<dbReference type="RefSeq" id="WP_000828390.1">
    <property type="nucleotide sequence ID" value="NC_011586.2"/>
</dbReference>
<dbReference type="SMR" id="B7I5Q3"/>
<dbReference type="KEGG" id="abn:AB57_1856"/>
<dbReference type="HOGENOM" id="CLU_003433_0_2_6"/>
<dbReference type="UniPathway" id="UPA00266"/>
<dbReference type="Proteomes" id="UP000007094">
    <property type="component" value="Chromosome"/>
</dbReference>
<dbReference type="GO" id="GO:1990221">
    <property type="term" value="C:L-cysteine desulfurase complex"/>
    <property type="evidence" value="ECO:0007669"/>
    <property type="project" value="UniProtKB-ARBA"/>
</dbReference>
<dbReference type="GO" id="GO:0051537">
    <property type="term" value="F:2 iron, 2 sulfur cluster binding"/>
    <property type="evidence" value="ECO:0007669"/>
    <property type="project" value="UniProtKB-UniRule"/>
</dbReference>
<dbReference type="GO" id="GO:0031071">
    <property type="term" value="F:cysteine desulfurase activity"/>
    <property type="evidence" value="ECO:0007669"/>
    <property type="project" value="UniProtKB-UniRule"/>
</dbReference>
<dbReference type="GO" id="GO:0046872">
    <property type="term" value="F:metal ion binding"/>
    <property type="evidence" value="ECO:0007669"/>
    <property type="project" value="UniProtKB-KW"/>
</dbReference>
<dbReference type="GO" id="GO:0030170">
    <property type="term" value="F:pyridoxal phosphate binding"/>
    <property type="evidence" value="ECO:0007669"/>
    <property type="project" value="UniProtKB-UniRule"/>
</dbReference>
<dbReference type="GO" id="GO:0044571">
    <property type="term" value="P:[2Fe-2S] cluster assembly"/>
    <property type="evidence" value="ECO:0007669"/>
    <property type="project" value="UniProtKB-UniRule"/>
</dbReference>
<dbReference type="FunFam" id="3.40.640.10:FF:000003">
    <property type="entry name" value="Cysteine desulfurase IscS"/>
    <property type="match status" value="1"/>
</dbReference>
<dbReference type="FunFam" id="3.90.1150.10:FF:000002">
    <property type="entry name" value="Cysteine desulfurase IscS"/>
    <property type="match status" value="1"/>
</dbReference>
<dbReference type="Gene3D" id="3.90.1150.10">
    <property type="entry name" value="Aspartate Aminotransferase, domain 1"/>
    <property type="match status" value="1"/>
</dbReference>
<dbReference type="Gene3D" id="3.40.640.10">
    <property type="entry name" value="Type I PLP-dependent aspartate aminotransferase-like (Major domain)"/>
    <property type="match status" value="1"/>
</dbReference>
<dbReference type="HAMAP" id="MF_00331">
    <property type="entry name" value="Cys_desulf_IscS"/>
    <property type="match status" value="1"/>
</dbReference>
<dbReference type="InterPro" id="IPR000192">
    <property type="entry name" value="Aminotrans_V_dom"/>
</dbReference>
<dbReference type="InterPro" id="IPR020578">
    <property type="entry name" value="Aminotrans_V_PyrdxlP_BS"/>
</dbReference>
<dbReference type="InterPro" id="IPR010240">
    <property type="entry name" value="Cys_deSase_IscS"/>
</dbReference>
<dbReference type="InterPro" id="IPR016454">
    <property type="entry name" value="Cysteine_dSase"/>
</dbReference>
<dbReference type="InterPro" id="IPR015424">
    <property type="entry name" value="PyrdxlP-dep_Trfase"/>
</dbReference>
<dbReference type="InterPro" id="IPR015421">
    <property type="entry name" value="PyrdxlP-dep_Trfase_major"/>
</dbReference>
<dbReference type="InterPro" id="IPR015422">
    <property type="entry name" value="PyrdxlP-dep_Trfase_small"/>
</dbReference>
<dbReference type="NCBIfam" id="TIGR02006">
    <property type="entry name" value="IscS"/>
    <property type="match status" value="1"/>
</dbReference>
<dbReference type="NCBIfam" id="NF010611">
    <property type="entry name" value="PRK14012.1"/>
    <property type="match status" value="1"/>
</dbReference>
<dbReference type="PANTHER" id="PTHR11601:SF34">
    <property type="entry name" value="CYSTEINE DESULFURASE"/>
    <property type="match status" value="1"/>
</dbReference>
<dbReference type="PANTHER" id="PTHR11601">
    <property type="entry name" value="CYSTEINE DESULFURYLASE FAMILY MEMBER"/>
    <property type="match status" value="1"/>
</dbReference>
<dbReference type="Pfam" id="PF00266">
    <property type="entry name" value="Aminotran_5"/>
    <property type="match status" value="1"/>
</dbReference>
<dbReference type="PIRSF" id="PIRSF005572">
    <property type="entry name" value="NifS"/>
    <property type="match status" value="1"/>
</dbReference>
<dbReference type="SUPFAM" id="SSF53383">
    <property type="entry name" value="PLP-dependent transferases"/>
    <property type="match status" value="1"/>
</dbReference>
<dbReference type="PROSITE" id="PS00595">
    <property type="entry name" value="AA_TRANSFER_CLASS_5"/>
    <property type="match status" value="1"/>
</dbReference>
<keyword id="KW-0001">2Fe-2S</keyword>
<keyword id="KW-0963">Cytoplasm</keyword>
<keyword id="KW-0408">Iron</keyword>
<keyword id="KW-0411">Iron-sulfur</keyword>
<keyword id="KW-0479">Metal-binding</keyword>
<keyword id="KW-0663">Pyridoxal phosphate</keyword>
<keyword id="KW-0808">Transferase</keyword>
<gene>
    <name evidence="1" type="primary">iscS</name>
    <name type="ordered locus">AB57_1856</name>
</gene>
<organism>
    <name type="scientific">Acinetobacter baumannii (strain AB0057)</name>
    <dbReference type="NCBI Taxonomy" id="480119"/>
    <lineage>
        <taxon>Bacteria</taxon>
        <taxon>Pseudomonadati</taxon>
        <taxon>Pseudomonadota</taxon>
        <taxon>Gammaproteobacteria</taxon>
        <taxon>Moraxellales</taxon>
        <taxon>Moraxellaceae</taxon>
        <taxon>Acinetobacter</taxon>
        <taxon>Acinetobacter calcoaceticus/baumannii complex</taxon>
    </lineage>
</organism>
<accession>B7I5Q3</accession>
<comment type="function">
    <text evidence="1">Master enzyme that delivers sulfur to a number of partners involved in Fe-S cluster assembly, tRNA modification or cofactor biosynthesis. Catalyzes the removal of elemental sulfur atoms from cysteine to produce alanine. Functions as a sulfur delivery protein for Fe-S cluster synthesis onto IscU, an Fe-S scaffold assembly protein, as well as other S acceptor proteins.</text>
</comment>
<comment type="catalytic activity">
    <reaction evidence="1">
        <text>(sulfur carrier)-H + L-cysteine = (sulfur carrier)-SH + L-alanine</text>
        <dbReference type="Rhea" id="RHEA:43892"/>
        <dbReference type="Rhea" id="RHEA-COMP:14737"/>
        <dbReference type="Rhea" id="RHEA-COMP:14739"/>
        <dbReference type="ChEBI" id="CHEBI:29917"/>
        <dbReference type="ChEBI" id="CHEBI:35235"/>
        <dbReference type="ChEBI" id="CHEBI:57972"/>
        <dbReference type="ChEBI" id="CHEBI:64428"/>
        <dbReference type="EC" id="2.8.1.7"/>
    </reaction>
</comment>
<comment type="cofactor">
    <cofactor evidence="1">
        <name>pyridoxal 5'-phosphate</name>
        <dbReference type="ChEBI" id="CHEBI:597326"/>
    </cofactor>
</comment>
<comment type="pathway">
    <text evidence="1">Cofactor biosynthesis; iron-sulfur cluster biosynthesis.</text>
</comment>
<comment type="subunit">
    <text evidence="1">Homodimer. Forms a heterotetramer with IscU, interacts with other sulfur acceptors.</text>
</comment>
<comment type="subcellular location">
    <subcellularLocation>
        <location evidence="1">Cytoplasm</location>
    </subcellularLocation>
</comment>
<comment type="similarity">
    <text evidence="1">Belongs to the class-V pyridoxal-phosphate-dependent aminotransferase family. NifS/IscS subfamily.</text>
</comment>
<feature type="chain" id="PRO_1000119615" description="Cysteine desulfurase IscS">
    <location>
        <begin position="1"/>
        <end position="405"/>
    </location>
</feature>
<feature type="active site" description="Cysteine persulfide intermediate" evidence="1">
    <location>
        <position position="329"/>
    </location>
</feature>
<feature type="binding site" evidence="1">
    <location>
        <begin position="75"/>
        <end position="76"/>
    </location>
    <ligand>
        <name>pyridoxal 5'-phosphate</name>
        <dbReference type="ChEBI" id="CHEBI:597326"/>
    </ligand>
</feature>
<feature type="binding site" evidence="1">
    <location>
        <position position="156"/>
    </location>
    <ligand>
        <name>pyridoxal 5'-phosphate</name>
        <dbReference type="ChEBI" id="CHEBI:597326"/>
    </ligand>
</feature>
<feature type="binding site" evidence="1">
    <location>
        <position position="184"/>
    </location>
    <ligand>
        <name>pyridoxal 5'-phosphate</name>
        <dbReference type="ChEBI" id="CHEBI:597326"/>
    </ligand>
</feature>
<feature type="binding site" evidence="1">
    <location>
        <begin position="204"/>
        <end position="206"/>
    </location>
    <ligand>
        <name>pyridoxal 5'-phosphate</name>
        <dbReference type="ChEBI" id="CHEBI:597326"/>
    </ligand>
</feature>
<feature type="binding site" evidence="1">
    <location>
        <position position="244"/>
    </location>
    <ligand>
        <name>pyridoxal 5'-phosphate</name>
        <dbReference type="ChEBI" id="CHEBI:597326"/>
    </ligand>
</feature>
<feature type="binding site" description="via persulfide group" evidence="1">
    <location>
        <position position="329"/>
    </location>
    <ligand>
        <name>[2Fe-2S] cluster</name>
        <dbReference type="ChEBI" id="CHEBI:190135"/>
        <note>ligand shared with IscU</note>
    </ligand>
</feature>
<feature type="modified residue" description="N6-(pyridoxal phosphate)lysine" evidence="1">
    <location>
        <position position="207"/>
    </location>
</feature>
<reference key="1">
    <citation type="journal article" date="2008" name="J. Bacteriol.">
        <title>Comparative genome sequence analysis of multidrug-resistant Acinetobacter baumannii.</title>
        <authorList>
            <person name="Adams M.D."/>
            <person name="Goglin K."/>
            <person name="Molyneaux N."/>
            <person name="Hujer K.M."/>
            <person name="Lavender H."/>
            <person name="Jamison J.J."/>
            <person name="MacDonald I.J."/>
            <person name="Martin K.M."/>
            <person name="Russo T."/>
            <person name="Campagnari A.A."/>
            <person name="Hujer A.M."/>
            <person name="Bonomo R.A."/>
            <person name="Gill S.R."/>
        </authorList>
    </citation>
    <scope>NUCLEOTIDE SEQUENCE [LARGE SCALE GENOMIC DNA]</scope>
    <source>
        <strain>AB0057</strain>
    </source>
</reference>
<sequence length="405" mass="44853">MKRPIYLDYAATTPVDPQVAERMMECLTFDGTFGNAASRSHAYGWQAEEKVEYAREQVANLIKADPREIVWTSGATESDNLALKGVAQFYASKGKHIITSKIEHKAVLDPCRELEEQGFEITYLEPEPQTGLITPEMVKAALRPDTILVSLMMVNNEIGTVTDVAAIGELTRANKTFFHVDAAQAAGKVDIDLSTMKIDLMSFSAHKIYGPKGIGALYVRRSPRVRLKAQIHGGGHERGMRSGTLATHQIVGMGEAFELAGKTMHAEQERIRKLRDKLWNGLQDLEQVFLNGHPTQNVANYLNVSFNFVEGESLMMSLKDAAVSSGSACTSATLEPSYVLRALGLSDELAHSSIRFSFGKYTTEEDIDHVLTITKAAVEKLRELSPLWDMYKEGIDLSTVEWAEH</sequence>
<name>ISCS_ACIB5</name>
<evidence type="ECO:0000255" key="1">
    <source>
        <dbReference type="HAMAP-Rule" id="MF_00331"/>
    </source>
</evidence>
<protein>
    <recommendedName>
        <fullName evidence="1">Cysteine desulfurase IscS</fullName>
        <ecNumber evidence="1">2.8.1.7</ecNumber>
    </recommendedName>
</protein>
<proteinExistence type="inferred from homology"/>